<protein>
    <recommendedName>
        <fullName>Heme-responsive zinc finger transcription factor HAP1</fullName>
    </recommendedName>
    <alternativeName>
        <fullName>CYP1 activatory protein</fullName>
    </alternativeName>
    <alternativeName>
        <fullName>Heme activator protein 1</fullName>
    </alternativeName>
</protein>
<comment type="function">
    <text evidence="1">Regulation of oxygen dependent gene expression. It modulates the expression of Iso-1 (CYP1) and Iso-2 (CYP3) cytochrome c. In response to heme, promotes transcription of genes encoding functions required for respiration, controlling oxidative damage and repression of anaerobic genes. Binds to the sequence 5'-CGGNNNTNNCGG-3' (By similarity).</text>
</comment>
<comment type="subunit">
    <text evidence="1">Binds DNA as a homodimer. Interacts with SRO9 and YDJ1. In the absence of heme, binds to at least four cellular proteins, including YDJ1 and SRO9, forming a high-molecular-weight complex (HMC) which results in repression of its activity and dictates its DNA-binding specificity (By similarity).</text>
</comment>
<comment type="subcellular location">
    <subcellularLocation>
        <location evidence="3">Nucleus</location>
    </subcellularLocation>
</comment>
<comment type="miscellaneous">
    <text evidence="1">Heme is an effector molecule for CYP1/HAP1. The repeat region (see FT table) mediates heme induction by masking the DNA-binding domain in the absence of inducer (By similarity).</text>
</comment>
<dbReference type="EMBL" id="AAFW02000169">
    <property type="protein sequence ID" value="EDN59470.1"/>
    <property type="molecule type" value="Genomic_DNA"/>
</dbReference>
<dbReference type="SMR" id="A7A1D7"/>
<dbReference type="HOGENOM" id="CLU_004380_0_0_1"/>
<dbReference type="OrthoDB" id="40778at4893"/>
<dbReference type="Proteomes" id="UP000007060">
    <property type="component" value="Unassembled WGS sequence"/>
</dbReference>
<dbReference type="GO" id="GO:0005634">
    <property type="term" value="C:nucleus"/>
    <property type="evidence" value="ECO:0007669"/>
    <property type="project" value="UniProtKB-SubCell"/>
</dbReference>
<dbReference type="GO" id="GO:0001228">
    <property type="term" value="F:DNA-binding transcription activator activity, RNA polymerase II-specific"/>
    <property type="evidence" value="ECO:0007669"/>
    <property type="project" value="TreeGrafter"/>
</dbReference>
<dbReference type="GO" id="GO:0000978">
    <property type="term" value="F:RNA polymerase II cis-regulatory region sequence-specific DNA binding"/>
    <property type="evidence" value="ECO:0007669"/>
    <property type="project" value="TreeGrafter"/>
</dbReference>
<dbReference type="GO" id="GO:0008270">
    <property type="term" value="F:zinc ion binding"/>
    <property type="evidence" value="ECO:0007669"/>
    <property type="project" value="InterPro"/>
</dbReference>
<dbReference type="GO" id="GO:0006351">
    <property type="term" value="P:DNA-templated transcription"/>
    <property type="evidence" value="ECO:0007669"/>
    <property type="project" value="InterPro"/>
</dbReference>
<dbReference type="CDD" id="cd12148">
    <property type="entry name" value="fungal_TF_MHR"/>
    <property type="match status" value="1"/>
</dbReference>
<dbReference type="CDD" id="cd00067">
    <property type="entry name" value="GAL4"/>
    <property type="match status" value="1"/>
</dbReference>
<dbReference type="CDD" id="cd14655">
    <property type="entry name" value="ZIP_Hap1"/>
    <property type="match status" value="1"/>
</dbReference>
<dbReference type="FunFam" id="4.10.240.10:FF:000014">
    <property type="entry name" value="HAP1p Zinc finger transcription factor"/>
    <property type="match status" value="1"/>
</dbReference>
<dbReference type="Gene3D" id="1.20.5.170">
    <property type="match status" value="1"/>
</dbReference>
<dbReference type="Gene3D" id="4.10.240.10">
    <property type="entry name" value="Zn(2)-C6 fungal-type DNA-binding domain"/>
    <property type="match status" value="1"/>
</dbReference>
<dbReference type="InterPro" id="IPR046347">
    <property type="entry name" value="bZIP_sf"/>
</dbReference>
<dbReference type="InterPro" id="IPR051430">
    <property type="entry name" value="Fungal_TF_Env_Response"/>
</dbReference>
<dbReference type="InterPro" id="IPR007219">
    <property type="entry name" value="Transcription_factor_dom_fun"/>
</dbReference>
<dbReference type="InterPro" id="IPR036864">
    <property type="entry name" value="Zn2-C6_fun-type_DNA-bd_sf"/>
</dbReference>
<dbReference type="InterPro" id="IPR001138">
    <property type="entry name" value="Zn2Cys6_DnaBD"/>
</dbReference>
<dbReference type="PANTHER" id="PTHR31944">
    <property type="entry name" value="HEME-RESPONSIVE ZINC FINGER TRANSCRIPTION FACTOR HAP1"/>
    <property type="match status" value="1"/>
</dbReference>
<dbReference type="PANTHER" id="PTHR31944:SF131">
    <property type="entry name" value="HEME-RESPONSIVE ZINC FINGER TRANSCRIPTION FACTOR HAP1"/>
    <property type="match status" value="1"/>
</dbReference>
<dbReference type="Pfam" id="PF00172">
    <property type="entry name" value="Zn_clus"/>
    <property type="match status" value="1"/>
</dbReference>
<dbReference type="SMART" id="SM00906">
    <property type="entry name" value="Fungal_trans"/>
    <property type="match status" value="1"/>
</dbReference>
<dbReference type="SMART" id="SM00066">
    <property type="entry name" value="GAL4"/>
    <property type="match status" value="1"/>
</dbReference>
<dbReference type="SUPFAM" id="SSF57959">
    <property type="entry name" value="Leucine zipper domain"/>
    <property type="match status" value="1"/>
</dbReference>
<dbReference type="SUPFAM" id="SSF57701">
    <property type="entry name" value="Zn2/Cys6 DNA-binding domain"/>
    <property type="match status" value="1"/>
</dbReference>
<dbReference type="PROSITE" id="PS00463">
    <property type="entry name" value="ZN2_CY6_FUNGAL_1"/>
    <property type="match status" value="1"/>
</dbReference>
<dbReference type="PROSITE" id="PS50048">
    <property type="entry name" value="ZN2_CY6_FUNGAL_2"/>
    <property type="match status" value="1"/>
</dbReference>
<feature type="chain" id="PRO_0000392061" description="Heme-responsive zinc finger transcription factor HAP1">
    <location>
        <begin position="1"/>
        <end position="1483"/>
    </location>
</feature>
<feature type="repeat" description="HRM 1">
    <location>
        <begin position="280"/>
        <end position="285"/>
    </location>
</feature>
<feature type="repeat" description="HRM 2">
    <location>
        <begin position="299"/>
        <end position="304"/>
    </location>
</feature>
<feature type="repeat" description="HRM 3">
    <location>
        <begin position="323"/>
        <end position="328"/>
    </location>
</feature>
<feature type="repeat" description="HRM 4">
    <location>
        <begin position="347"/>
        <end position="352"/>
    </location>
</feature>
<feature type="repeat" description="HRM 5">
    <location>
        <begin position="389"/>
        <end position="394"/>
    </location>
</feature>
<feature type="repeat" description="HRM 6">
    <location>
        <begin position="415"/>
        <end position="420"/>
    </location>
</feature>
<feature type="repeat" description="HRM 7">
    <location>
        <begin position="1192"/>
        <end position="1197"/>
    </location>
</feature>
<feature type="DNA-binding region" description="Zn(2)-C6 fungal-type" evidence="3">
    <location>
        <begin position="64"/>
        <end position="93"/>
    </location>
</feature>
<feature type="region of interest" description="Disordered" evidence="4">
    <location>
        <begin position="1"/>
        <end position="56"/>
    </location>
</feature>
<feature type="region of interest" description="Disordered" evidence="4">
    <location>
        <begin position="162"/>
        <end position="208"/>
    </location>
</feature>
<feature type="region of interest" description="Heme-responsive; required for HMC formation" evidence="1">
    <location>
        <begin position="244"/>
        <end position="444"/>
    </location>
</feature>
<feature type="region of interest" description="Disordered" evidence="4">
    <location>
        <begin position="432"/>
        <end position="458"/>
    </location>
</feature>
<feature type="region of interest" description="Disordered" evidence="4">
    <location>
        <begin position="706"/>
        <end position="767"/>
    </location>
</feature>
<feature type="region of interest" description="Disordered" evidence="4">
    <location>
        <begin position="1384"/>
        <end position="1411"/>
    </location>
</feature>
<feature type="coiled-coil region" evidence="2">
    <location>
        <begin position="105"/>
        <end position="134"/>
    </location>
</feature>
<feature type="compositionally biased region" description="Polar residues" evidence="4">
    <location>
        <begin position="1"/>
        <end position="50"/>
    </location>
</feature>
<feature type="compositionally biased region" description="Polar residues" evidence="4">
    <location>
        <begin position="162"/>
        <end position="176"/>
    </location>
</feature>
<feature type="compositionally biased region" description="Low complexity" evidence="4">
    <location>
        <begin position="177"/>
        <end position="208"/>
    </location>
</feature>
<feature type="compositionally biased region" description="Polar residues" evidence="4">
    <location>
        <begin position="432"/>
        <end position="447"/>
    </location>
</feature>
<feature type="compositionally biased region" description="Polar residues" evidence="4">
    <location>
        <begin position="706"/>
        <end position="734"/>
    </location>
</feature>
<feature type="compositionally biased region" description="Low complexity" evidence="4">
    <location>
        <begin position="735"/>
        <end position="759"/>
    </location>
</feature>
<feature type="compositionally biased region" description="Polar residues" evidence="4">
    <location>
        <begin position="1388"/>
        <end position="1411"/>
    </location>
</feature>
<feature type="binding site" evidence="1">
    <location>
        <position position="64"/>
    </location>
    <ligand>
        <name>Zn(2+)</name>
        <dbReference type="ChEBI" id="CHEBI:29105"/>
        <label>1</label>
    </ligand>
</feature>
<feature type="binding site" evidence="1">
    <location>
        <position position="64"/>
    </location>
    <ligand>
        <name>Zn(2+)</name>
        <dbReference type="ChEBI" id="CHEBI:29105"/>
        <label>2</label>
    </ligand>
</feature>
<feature type="binding site" evidence="1">
    <location>
        <position position="67"/>
    </location>
    <ligand>
        <name>Zn(2+)</name>
        <dbReference type="ChEBI" id="CHEBI:29105"/>
        <label>1</label>
    </ligand>
</feature>
<feature type="binding site" evidence="1">
    <location>
        <position position="74"/>
    </location>
    <ligand>
        <name>Zn(2+)</name>
        <dbReference type="ChEBI" id="CHEBI:29105"/>
        <label>1</label>
    </ligand>
</feature>
<feature type="binding site" evidence="1">
    <location>
        <position position="81"/>
    </location>
    <ligand>
        <name>Zn(2+)</name>
        <dbReference type="ChEBI" id="CHEBI:29105"/>
        <label>1</label>
    </ligand>
</feature>
<feature type="binding site" evidence="1">
    <location>
        <position position="81"/>
    </location>
    <ligand>
        <name>Zn(2+)</name>
        <dbReference type="ChEBI" id="CHEBI:29105"/>
        <label>2</label>
    </ligand>
</feature>
<feature type="binding site" evidence="1">
    <location>
        <position position="84"/>
    </location>
    <ligand>
        <name>Zn(2+)</name>
        <dbReference type="ChEBI" id="CHEBI:29105"/>
        <label>2</label>
    </ligand>
</feature>
<feature type="binding site" evidence="1">
    <location>
        <position position="93"/>
    </location>
    <ligand>
        <name>Zn(2+)</name>
        <dbReference type="ChEBI" id="CHEBI:29105"/>
        <label>2</label>
    </ligand>
</feature>
<reference key="1">
    <citation type="journal article" date="2007" name="Proc. Natl. Acad. Sci. U.S.A.">
        <title>Genome sequencing and comparative analysis of Saccharomyces cerevisiae strain YJM789.</title>
        <authorList>
            <person name="Wei W."/>
            <person name="McCusker J.H."/>
            <person name="Hyman R.W."/>
            <person name="Jones T."/>
            <person name="Ning Y."/>
            <person name="Cao Z."/>
            <person name="Gu Z."/>
            <person name="Bruno D."/>
            <person name="Miranda M."/>
            <person name="Nguyen M."/>
            <person name="Wilhelmy J."/>
            <person name="Komp C."/>
            <person name="Tamse R."/>
            <person name="Wang X."/>
            <person name="Jia P."/>
            <person name="Luedi P."/>
            <person name="Oefner P.J."/>
            <person name="David L."/>
            <person name="Dietrich F.S."/>
            <person name="Li Y."/>
            <person name="Davis R.W."/>
            <person name="Steinmetz L.M."/>
        </authorList>
    </citation>
    <scope>NUCLEOTIDE SEQUENCE [LARGE SCALE GENOMIC DNA]</scope>
    <source>
        <strain>YJM789</strain>
    </source>
</reference>
<proteinExistence type="inferred from homology"/>
<organism>
    <name type="scientific">Saccharomyces cerevisiae (strain YJM789)</name>
    <name type="common">Baker's yeast</name>
    <dbReference type="NCBI Taxonomy" id="307796"/>
    <lineage>
        <taxon>Eukaryota</taxon>
        <taxon>Fungi</taxon>
        <taxon>Dikarya</taxon>
        <taxon>Ascomycota</taxon>
        <taxon>Saccharomycotina</taxon>
        <taxon>Saccharomycetes</taxon>
        <taxon>Saccharomycetales</taxon>
        <taxon>Saccharomycetaceae</taxon>
        <taxon>Saccharomyces</taxon>
    </lineage>
</organism>
<accession>A7A1D7</accession>
<gene>
    <name type="primary">HAP1</name>
    <name type="synonym">CYP1</name>
    <name type="ORF">SCY_3815</name>
</gene>
<evidence type="ECO:0000250" key="1"/>
<evidence type="ECO:0000255" key="2"/>
<evidence type="ECO:0000255" key="3">
    <source>
        <dbReference type="PROSITE-ProRule" id="PRU00227"/>
    </source>
</evidence>
<evidence type="ECO:0000256" key="4">
    <source>
        <dbReference type="SAM" id="MobiDB-lite"/>
    </source>
</evidence>
<sequence>MSNTPYNSSVPSIASMTQSSVSRSPNMHTATTPGANTSSNSPPLHMSSDSSKIKRKRNRIPLSCTICRKRKVKCDKLRPHCQQCTKTGVAHLCHYMEQTWAEEAEKELLKDNELKKLRERVKSLEKTLSKVHSSPSSNSLKSYNIPESSNLFMGSDEHTTLVNANTGSASSASHMHQQQQQQQQQEQQQDFSRSANANANSSSLSISNKYDNDELDLTKDFDLLHIKSNGTIHLGATHWLSIMKGDPYLKLLWGHIFAMREKLNEWYYQKNSYSKLKSSKCPINHAQAPPSAAAAATRKCPVDHSAFSSGMVAPKEETPLPRKCPVDHTMFSSGMIPPREDTSSQKRCPVDHTMYSAGMMPPKDETPSPFSTKAMIDHNKHTMNPPQSKCPVDHRNYMKDYPSDMANSSSNPASRCPIDHSSMKNTAALPASTHNTIPHHQPQSGSHARSHPAQNRKHDSYMTESEVLATLCEMLPPKRVIALFIEKFFKHLYPAIPILDEQNFKNHMNQMLSLSSMNPTVNNFGMSMPSSSTLENQPITQINLPKLSDSCNLGILIIILRLTWLSIPSNSCEVDLGEESGSFLVPNESSNMSASALTSMAKEESLLLKHETPVEALELCQKYLIKFDELSSISNNNVNLTTVQFAIFYNFYMKSASNDLTTLTNTNNTGMANPGHDSESHQILLSNITQMAFSCGLHRDPDNFPQLNATIPATSQDVSNNGSKKANPSTNPTLNNNMSAATTNSSSRSGSADSRSGSNPVNKKENQVSIERFKHTWRKIWYYIVSMDVNQSLSLGSPRLLRNLRDFSDTKLPSASRIDYVRDIKELIIVKNFTLFFQIDLCIIAVLNHILNVSLARSVRKFELDSLINLLKNLTYGTENVNDVVSSLINKGLLPTSEGGSVDSNNDEIYGLPKLPDILNHGQHNQNLYADGRNTSSSDIDKKLDLPHESTTRALFFSKHMTIRMLLYLLNYILFTHYEPMGSEDPGTNILAKEYAQEALNFAMDGYRNCMIFFNNIRNTNSLFDYMNVILSYPCLDIGHRSLQFIVCLILRAKCGPLTGMRESSIITNGTSSGFNSSVEDEDVKVKQESSDELKKDDFMKDVNLDSGDSLAEILMSRMLLFQKLTKQLSKKYNYAIRMNKSTGFFVSLLDTPSKKSDSKSGGSSFMLGNWKHPKVSNMSGFLAGDKDQLQKCPVYQDALGFVSPTGANEGSAPMQGMSLQGSTARMGGTQLPPIRSYKPITYTSSNLRRMNETGEAEAKRRRFNDGYIDNNSNNDIPRGISPKPSNGLSSVQPLLSSFSMNQLNGGTIPTVPSLTNITSQMGALPSLDRITTNQINLPDPSRDEAFDNSIKQMTPMTSAFMNANTTIPSSTLNGNMNMNGAGTANTDTSANGSALSTLTSPQGSDLASNSATQYKPDLEDFLMQNSNFNGLMINPSSLVEVVGGYNDPNNLGRNDAVDFLPVDNVEIDGLVDFYRADFPIWE</sequence>
<name>HAP1_YEAS7</name>
<keyword id="KW-0010">Activator</keyword>
<keyword id="KW-0175">Coiled coil</keyword>
<keyword id="KW-0238">DNA-binding</keyword>
<keyword id="KW-0349">Heme</keyword>
<keyword id="KW-0408">Iron</keyword>
<keyword id="KW-0479">Metal-binding</keyword>
<keyword id="KW-0539">Nucleus</keyword>
<keyword id="KW-0677">Repeat</keyword>
<keyword id="KW-0804">Transcription</keyword>
<keyword id="KW-0805">Transcription regulation</keyword>
<keyword id="KW-0862">Zinc</keyword>